<dbReference type="EMBL" id="JZ122270">
    <property type="status" value="NOT_ANNOTATED_CDS"/>
    <property type="molecule type" value="mRNA"/>
</dbReference>
<dbReference type="SMR" id="P0DUH8"/>
<dbReference type="GO" id="GO:0005576">
    <property type="term" value="C:extracellular region"/>
    <property type="evidence" value="ECO:0000314"/>
    <property type="project" value="UniProtKB"/>
</dbReference>
<dbReference type="GO" id="GO:0019871">
    <property type="term" value="F:sodium channel inhibitor activity"/>
    <property type="evidence" value="ECO:0007669"/>
    <property type="project" value="InterPro"/>
</dbReference>
<dbReference type="GO" id="GO:0090729">
    <property type="term" value="F:toxin activity"/>
    <property type="evidence" value="ECO:0007669"/>
    <property type="project" value="UniProtKB-KW"/>
</dbReference>
<dbReference type="GO" id="GO:0006952">
    <property type="term" value="P:defense response"/>
    <property type="evidence" value="ECO:0007669"/>
    <property type="project" value="InterPro"/>
</dbReference>
<dbReference type="CDD" id="cd23106">
    <property type="entry name" value="neurotoxins_LC_scorpion"/>
    <property type="match status" value="1"/>
</dbReference>
<dbReference type="Gene3D" id="3.30.30.10">
    <property type="entry name" value="Knottin, scorpion toxin-like"/>
    <property type="match status" value="1"/>
</dbReference>
<dbReference type="InterPro" id="IPR044062">
    <property type="entry name" value="LCN-type_CS_alpha_beta_dom"/>
</dbReference>
<dbReference type="InterPro" id="IPR003614">
    <property type="entry name" value="Scorpion_toxin-like"/>
</dbReference>
<dbReference type="InterPro" id="IPR036574">
    <property type="entry name" value="Scorpion_toxin-like_sf"/>
</dbReference>
<dbReference type="InterPro" id="IPR018218">
    <property type="entry name" value="Scorpion_toxinL"/>
</dbReference>
<dbReference type="InterPro" id="IPR002061">
    <property type="entry name" value="Scorpion_toxinL/defensin"/>
</dbReference>
<dbReference type="Pfam" id="PF00537">
    <property type="entry name" value="Toxin_3"/>
    <property type="match status" value="1"/>
</dbReference>
<dbReference type="PRINTS" id="PR00285">
    <property type="entry name" value="SCORPNTOXIN"/>
</dbReference>
<dbReference type="SMART" id="SM00505">
    <property type="entry name" value="Knot1"/>
    <property type="match status" value="1"/>
</dbReference>
<dbReference type="SUPFAM" id="SSF57095">
    <property type="entry name" value="Scorpion toxin-like"/>
    <property type="match status" value="1"/>
</dbReference>
<dbReference type="PROSITE" id="PS51863">
    <property type="entry name" value="LCN_CSAB"/>
    <property type="match status" value="1"/>
</dbReference>
<accession>P0DUH8</accession>
<reference key="1">
    <citation type="journal article" date="2013" name="PLoS ONE">
        <title>Mass fingerprinting of the venom and transcriptome of venom gland of scorpion Centruroides tecomanus.</title>
        <authorList>
            <person name="Valdez-Velazquez L.L."/>
            <person name="Quintero-Hernandez V."/>
            <person name="Romero-Gutierrez M.T."/>
            <person name="Coronas F.I."/>
            <person name="Possani L.D."/>
        </authorList>
    </citation>
    <scope>NUCLEOTIDE SEQUENCE [MRNA]</scope>
    <scope>PROTEIN SEQUENCE OF 19-31</scope>
    <scope>PROBABLE AMIDATION AT CYS-83</scope>
    <scope>MASS SPECTROMETRY</scope>
    <scope>SUBCELLULAR LOCATION</scope>
    <source>
        <tissue>Venom</tissue>
        <tissue>Venom gland</tissue>
    </source>
</reference>
<organism>
    <name type="scientific">Centruroides tecomanus</name>
    <name type="common">Scorpion</name>
    <name type="synonym">Centruroides limpidus tecomanus</name>
    <dbReference type="NCBI Taxonomy" id="1028682"/>
    <lineage>
        <taxon>Eukaryota</taxon>
        <taxon>Metazoa</taxon>
        <taxon>Ecdysozoa</taxon>
        <taxon>Arthropoda</taxon>
        <taxon>Chelicerata</taxon>
        <taxon>Arachnida</taxon>
        <taxon>Scorpiones</taxon>
        <taxon>Buthida</taxon>
        <taxon>Buthoidea</taxon>
        <taxon>Buthidae</taxon>
        <taxon>Centruroides</taxon>
    </lineage>
</organism>
<comment type="function">
    <text evidence="1">Beta toxins bind voltage-independently at site-4 of sodium channels (Nav) and shift the voltage of activation toward more negative potentials thereby affecting sodium channel activation and promoting spontaneous and repetitive firing.</text>
</comment>
<comment type="subcellular location">
    <subcellularLocation>
        <location evidence="3">Secreted</location>
    </subcellularLocation>
</comment>
<comment type="tissue specificity">
    <text evidence="6">Expressed by the venom gland.</text>
</comment>
<comment type="domain">
    <text evidence="5">Has the structural arrangement of an alpha-helix connected to antiparallel beta-sheets by disulfide bonds (CS-alpha/beta).</text>
</comment>
<comment type="mass spectrometry">
    <text>Average mass.</text>
</comment>
<comment type="similarity">
    <text evidence="5">Belongs to the long (4 C-C) scorpion toxin superfamily. Sodium channel inhibitor family. Beta subfamily.</text>
</comment>
<feature type="signal peptide" evidence="6">
    <location>
        <begin position="1"/>
        <end position="18"/>
    </location>
</feature>
<feature type="chain" id="PRO_0000452424" description="Beta-toxin Ct6" evidence="6">
    <location>
        <begin position="19"/>
        <end position="83"/>
    </location>
</feature>
<feature type="domain" description="LCN-type CS-alpha/beta" evidence="2">
    <location>
        <begin position="19"/>
        <end position="84"/>
    </location>
</feature>
<feature type="modified residue" description="Cysteine amide" evidence="6">
    <location>
        <position position="83"/>
    </location>
</feature>
<feature type="disulfide bond" evidence="2">
    <location>
        <begin position="30"/>
        <end position="83"/>
    </location>
</feature>
<feature type="disulfide bond" evidence="2">
    <location>
        <begin position="34"/>
        <end position="59"/>
    </location>
</feature>
<feature type="disulfide bond" evidence="2">
    <location>
        <begin position="43"/>
        <end position="64"/>
    </location>
</feature>
<feature type="disulfide bond" evidence="2">
    <location>
        <begin position="47"/>
        <end position="66"/>
    </location>
</feature>
<proteinExistence type="evidence at protein level"/>
<protein>
    <recommendedName>
        <fullName evidence="4">Beta-toxin Ct6</fullName>
    </recommendedName>
</protein>
<keyword id="KW-0027">Amidation</keyword>
<keyword id="KW-0903">Direct protein sequencing</keyword>
<keyword id="KW-1015">Disulfide bond</keyword>
<keyword id="KW-0872">Ion channel impairing toxin</keyword>
<keyword id="KW-0528">Neurotoxin</keyword>
<keyword id="KW-0964">Secreted</keyword>
<keyword id="KW-0732">Signal</keyword>
<keyword id="KW-0800">Toxin</keyword>
<keyword id="KW-0738">Voltage-gated sodium channel impairing toxin</keyword>
<evidence type="ECO:0000250" key="1">
    <source>
        <dbReference type="UniProtKB" id="P60266"/>
    </source>
</evidence>
<evidence type="ECO:0000255" key="2">
    <source>
        <dbReference type="PROSITE-ProRule" id="PRU01210"/>
    </source>
</evidence>
<evidence type="ECO:0000269" key="3">
    <source>
    </source>
</evidence>
<evidence type="ECO:0000303" key="4">
    <source>
    </source>
</evidence>
<evidence type="ECO:0000305" key="5"/>
<evidence type="ECO:0000305" key="6">
    <source>
    </source>
</evidence>
<sequence>MKTFVLALCLVLIGMVYAKDGYLVSKHTGCKLGCSPKIGDRYCHIECTSMNHKGDEGYCYWLACYCKGMPENAEVYPLPNKSCGK</sequence>
<name>SCX6_CENTE</name>